<proteinExistence type="inferred from homology"/>
<gene>
    <name type="primary">fliR</name>
    <name type="ordered locus">BUsg_077</name>
</gene>
<reference key="1">
    <citation type="journal article" date="2002" name="Science">
        <title>50 million years of genomic stasis in endosymbiotic bacteria.</title>
        <authorList>
            <person name="Tamas I."/>
            <person name="Klasson L."/>
            <person name="Canbaeck B."/>
            <person name="Naeslund A.K."/>
            <person name="Eriksson A.-S."/>
            <person name="Wernegreen J.J."/>
            <person name="Sandstroem J.P."/>
            <person name="Moran N.A."/>
            <person name="Andersson S.G.E."/>
        </authorList>
    </citation>
    <scope>NUCLEOTIDE SEQUENCE [LARGE SCALE GENOMIC DNA]</scope>
    <source>
        <strain>Sg</strain>
    </source>
</reference>
<evidence type="ECO:0000250" key="1"/>
<evidence type="ECO:0000255" key="2"/>
<evidence type="ECO:0000305" key="3"/>
<sequence length="258" mass="29666">MLTFNSFNLAILISNFFWPLVRILAFFSTAPIFNDQNVNKKVKIILSFLIAFLIKPFLPKVNVELFSIIGLFLLFQQILIGIALGLTCQFLFAAFTLSGEIIALQIGLSFANFFNSNRYIGTSLISRWLNILNLLFFLTLNVHLYLVFMLIDSFYKIPVDVNFLSANIFFIFLKFSSNIFLNGVMFALPIMIFFLISTLIMSILNRLSPQISIFSIGFPLNLLIGILILYYLMSMSFPFFKSLVNQLISFIFYTFLKI</sequence>
<feature type="chain" id="PRO_0000192052" description="Flagellar biosynthetic protein FliR">
    <location>
        <begin position="1"/>
        <end position="258"/>
    </location>
</feature>
<feature type="transmembrane region" description="Helical" evidence="2">
    <location>
        <begin position="7"/>
        <end position="29"/>
    </location>
</feature>
<feature type="transmembrane region" description="Helical" evidence="2">
    <location>
        <begin position="44"/>
        <end position="58"/>
    </location>
</feature>
<feature type="transmembrane region" description="Helical" evidence="2">
    <location>
        <begin position="65"/>
        <end position="87"/>
    </location>
</feature>
<feature type="transmembrane region" description="Helical" evidence="2">
    <location>
        <begin position="91"/>
        <end position="113"/>
    </location>
</feature>
<feature type="transmembrane region" description="Helical" evidence="2">
    <location>
        <begin position="129"/>
        <end position="151"/>
    </location>
</feature>
<feature type="transmembrane region" description="Helical" evidence="2">
    <location>
        <begin position="182"/>
        <end position="204"/>
    </location>
</feature>
<feature type="transmembrane region" description="Helical" evidence="2">
    <location>
        <begin position="211"/>
        <end position="233"/>
    </location>
</feature>
<organism>
    <name type="scientific">Buchnera aphidicola subsp. Schizaphis graminum (strain Sg)</name>
    <dbReference type="NCBI Taxonomy" id="198804"/>
    <lineage>
        <taxon>Bacteria</taxon>
        <taxon>Pseudomonadati</taxon>
        <taxon>Pseudomonadota</taxon>
        <taxon>Gammaproteobacteria</taxon>
        <taxon>Enterobacterales</taxon>
        <taxon>Erwiniaceae</taxon>
        <taxon>Buchnera</taxon>
    </lineage>
</organism>
<comment type="function">
    <text evidence="1">Role in flagellar biosynthesis.</text>
</comment>
<comment type="subcellular location">
    <subcellularLocation>
        <location evidence="3">Cell membrane</location>
        <topology evidence="3">Multi-pass membrane protein</topology>
    </subcellularLocation>
    <subcellularLocation>
        <location evidence="1">Bacterial flagellum basal body</location>
    </subcellularLocation>
</comment>
<comment type="similarity">
    <text evidence="3">Belongs to the FliR/MopE/SpaR family.</text>
</comment>
<name>FLIR_BUCAP</name>
<dbReference type="EMBL" id="AE013218">
    <property type="protein sequence ID" value="AAM67647.1"/>
    <property type="molecule type" value="Genomic_DNA"/>
</dbReference>
<dbReference type="RefSeq" id="WP_011053613.1">
    <property type="nucleotide sequence ID" value="NC_004061.1"/>
</dbReference>
<dbReference type="SMR" id="Q8KA35"/>
<dbReference type="STRING" id="198804.BUsg_077"/>
<dbReference type="GeneID" id="93003545"/>
<dbReference type="KEGG" id="bas:BUsg_077"/>
<dbReference type="eggNOG" id="COG1684">
    <property type="taxonomic scope" value="Bacteria"/>
</dbReference>
<dbReference type="HOGENOM" id="CLU_063626_4_1_6"/>
<dbReference type="Proteomes" id="UP000000416">
    <property type="component" value="Chromosome"/>
</dbReference>
<dbReference type="GO" id="GO:0009425">
    <property type="term" value="C:bacterial-type flagellum basal body"/>
    <property type="evidence" value="ECO:0007669"/>
    <property type="project" value="UniProtKB-SubCell"/>
</dbReference>
<dbReference type="GO" id="GO:0005886">
    <property type="term" value="C:plasma membrane"/>
    <property type="evidence" value="ECO:0007669"/>
    <property type="project" value="UniProtKB-SubCell"/>
</dbReference>
<dbReference type="GO" id="GO:0044780">
    <property type="term" value="P:bacterial-type flagellum assembly"/>
    <property type="evidence" value="ECO:0007669"/>
    <property type="project" value="InterPro"/>
</dbReference>
<dbReference type="GO" id="GO:0006605">
    <property type="term" value="P:protein targeting"/>
    <property type="evidence" value="ECO:0007669"/>
    <property type="project" value="InterPro"/>
</dbReference>
<dbReference type="InterPro" id="IPR006303">
    <property type="entry name" value="FliR"/>
</dbReference>
<dbReference type="InterPro" id="IPR002010">
    <property type="entry name" value="T3SS_IM_R"/>
</dbReference>
<dbReference type="NCBIfam" id="TIGR01400">
    <property type="entry name" value="fliR"/>
    <property type="match status" value="1"/>
</dbReference>
<dbReference type="PANTHER" id="PTHR30065">
    <property type="entry name" value="FLAGELLAR BIOSYNTHETIC PROTEIN FLIR"/>
    <property type="match status" value="1"/>
</dbReference>
<dbReference type="PANTHER" id="PTHR30065:SF8">
    <property type="entry name" value="FLAGELLAR BIOSYNTHETIC PROTEIN FLIR"/>
    <property type="match status" value="1"/>
</dbReference>
<dbReference type="Pfam" id="PF01311">
    <property type="entry name" value="Bac_export_1"/>
    <property type="match status" value="1"/>
</dbReference>
<dbReference type="PRINTS" id="PR00953">
    <property type="entry name" value="TYPE3IMRPROT"/>
</dbReference>
<keyword id="KW-0975">Bacterial flagellum</keyword>
<keyword id="KW-1003">Cell membrane</keyword>
<keyword id="KW-0472">Membrane</keyword>
<keyword id="KW-0812">Transmembrane</keyword>
<keyword id="KW-1133">Transmembrane helix</keyword>
<protein>
    <recommendedName>
        <fullName>Flagellar biosynthetic protein FliR</fullName>
    </recommendedName>
</protein>
<accession>Q8KA35</accession>